<reference key="1">
    <citation type="submission" date="2005-03" db="EMBL/GenBank/DDBJ databases">
        <title>Brevibacillus brevis strain 47, complete genome.</title>
        <authorList>
            <person name="Hosoyama A."/>
            <person name="Yamada R."/>
            <person name="Hongo Y."/>
            <person name="Terui Y."/>
            <person name="Ankai A."/>
            <person name="Masuyama W."/>
            <person name="Sekiguchi M."/>
            <person name="Takeda T."/>
            <person name="Asano K."/>
            <person name="Ohji S."/>
            <person name="Ichikawa N."/>
            <person name="Narita S."/>
            <person name="Aoki N."/>
            <person name="Miura H."/>
            <person name="Matsushita S."/>
            <person name="Sekigawa T."/>
            <person name="Yamagata H."/>
            <person name="Yoshikawa H."/>
            <person name="Udaka S."/>
            <person name="Tanikawa S."/>
            <person name="Fujita N."/>
        </authorList>
    </citation>
    <scope>NUCLEOTIDE SEQUENCE [LARGE SCALE GENOMIC DNA]</scope>
    <source>
        <strain>47 / JCM 6285 / NBRC 100599</strain>
    </source>
</reference>
<sequence>MSFAAHTKKELTMMEGADCCSKAELSALIRMNGSLQFGAGRLVLDVTTENAAIARRIYTLIKRLFQIHAELLVRKKMRLKKNNVYIVRIPNKANEILQDLGIMDQSLSFIPGIAPEIVKKSCCRAAYLRGAFLAGGSVNHPEASSYHLEIFTSYQDFCEALTKIANRYKLNAKCIERKKGYVLYIKEGEKITEFLSLIGAHQALLYFEDVRIVKDMRNSVNRLHNCEIANINKTVNAATRQMENIQLIDQEMGLENLPKRLREVAELRVAHPDINLKELGEMVPSGVVSKSGINHRLRKINEIADKIREKQNISM</sequence>
<proteinExistence type="inferred from homology"/>
<protein>
    <recommendedName>
        <fullName evidence="1">Probable cell division protein WhiA</fullName>
    </recommendedName>
</protein>
<gene>
    <name evidence="1" type="primary">whiA</name>
    <name type="ordered locus">BBR47_52600</name>
</gene>
<comment type="function">
    <text evidence="1">Involved in cell division and chromosome segregation.</text>
</comment>
<comment type="similarity">
    <text evidence="1">Belongs to the WhiA family.</text>
</comment>
<organism>
    <name type="scientific">Brevibacillus brevis (strain 47 / JCM 6285 / NBRC 100599)</name>
    <dbReference type="NCBI Taxonomy" id="358681"/>
    <lineage>
        <taxon>Bacteria</taxon>
        <taxon>Bacillati</taxon>
        <taxon>Bacillota</taxon>
        <taxon>Bacilli</taxon>
        <taxon>Bacillales</taxon>
        <taxon>Paenibacillaceae</taxon>
        <taxon>Brevibacillus</taxon>
    </lineage>
</organism>
<evidence type="ECO:0000255" key="1">
    <source>
        <dbReference type="HAMAP-Rule" id="MF_01420"/>
    </source>
</evidence>
<keyword id="KW-0131">Cell cycle</keyword>
<keyword id="KW-0132">Cell division</keyword>
<keyword id="KW-0238">DNA-binding</keyword>
<keyword id="KW-1185">Reference proteome</keyword>
<name>WHIA_BREBN</name>
<dbReference type="EMBL" id="AP008955">
    <property type="protein sequence ID" value="BAH46237.1"/>
    <property type="molecule type" value="Genomic_DNA"/>
</dbReference>
<dbReference type="RefSeq" id="WP_015893487.1">
    <property type="nucleotide sequence ID" value="NC_012491.1"/>
</dbReference>
<dbReference type="SMR" id="C0Z6N8"/>
<dbReference type="STRING" id="358681.BBR47_52600"/>
<dbReference type="GeneID" id="87585459"/>
<dbReference type="KEGG" id="bbe:BBR47_52600"/>
<dbReference type="eggNOG" id="COG1481">
    <property type="taxonomic scope" value="Bacteria"/>
</dbReference>
<dbReference type="HOGENOM" id="CLU_053282_0_0_9"/>
<dbReference type="Proteomes" id="UP000001877">
    <property type="component" value="Chromosome"/>
</dbReference>
<dbReference type="GO" id="GO:0003677">
    <property type="term" value="F:DNA binding"/>
    <property type="evidence" value="ECO:0007669"/>
    <property type="project" value="UniProtKB-UniRule"/>
</dbReference>
<dbReference type="GO" id="GO:0051301">
    <property type="term" value="P:cell division"/>
    <property type="evidence" value="ECO:0007669"/>
    <property type="project" value="UniProtKB-UniRule"/>
</dbReference>
<dbReference type="GO" id="GO:0043937">
    <property type="term" value="P:regulation of sporulation"/>
    <property type="evidence" value="ECO:0007669"/>
    <property type="project" value="InterPro"/>
</dbReference>
<dbReference type="FunFam" id="3.10.28.10:FF:000002">
    <property type="entry name" value="Probable cell division protein WhiA"/>
    <property type="match status" value="1"/>
</dbReference>
<dbReference type="Gene3D" id="3.10.28.10">
    <property type="entry name" value="Homing endonucleases"/>
    <property type="match status" value="1"/>
</dbReference>
<dbReference type="HAMAP" id="MF_01420">
    <property type="entry name" value="HTH_type_WhiA"/>
    <property type="match status" value="1"/>
</dbReference>
<dbReference type="InterPro" id="IPR027434">
    <property type="entry name" value="Homing_endonucl"/>
</dbReference>
<dbReference type="InterPro" id="IPR018478">
    <property type="entry name" value="Sporu_reg_WhiA_N_dom"/>
</dbReference>
<dbReference type="InterPro" id="IPR003802">
    <property type="entry name" value="Sporulation_regulator_WhiA"/>
</dbReference>
<dbReference type="InterPro" id="IPR023054">
    <property type="entry name" value="Sporulation_regulator_WhiA_C"/>
</dbReference>
<dbReference type="InterPro" id="IPR039518">
    <property type="entry name" value="WhiA_LAGLIDADG_dom"/>
</dbReference>
<dbReference type="NCBIfam" id="TIGR00647">
    <property type="entry name" value="DNA_bind_WhiA"/>
    <property type="match status" value="1"/>
</dbReference>
<dbReference type="PANTHER" id="PTHR37307">
    <property type="entry name" value="CELL DIVISION PROTEIN WHIA-RELATED"/>
    <property type="match status" value="1"/>
</dbReference>
<dbReference type="PANTHER" id="PTHR37307:SF1">
    <property type="entry name" value="CELL DIVISION PROTEIN WHIA-RELATED"/>
    <property type="match status" value="1"/>
</dbReference>
<dbReference type="Pfam" id="PF02650">
    <property type="entry name" value="HTH_WhiA"/>
    <property type="match status" value="1"/>
</dbReference>
<dbReference type="Pfam" id="PF14527">
    <property type="entry name" value="LAGLIDADG_WhiA"/>
    <property type="match status" value="1"/>
</dbReference>
<dbReference type="Pfam" id="PF10298">
    <property type="entry name" value="WhiA_N"/>
    <property type="match status" value="1"/>
</dbReference>
<dbReference type="SUPFAM" id="SSF55608">
    <property type="entry name" value="Homing endonucleases"/>
    <property type="match status" value="1"/>
</dbReference>
<accession>C0Z6N8</accession>
<feature type="chain" id="PRO_1000184854" description="Probable cell division protein WhiA">
    <location>
        <begin position="1"/>
        <end position="315"/>
    </location>
</feature>
<feature type="DNA-binding region" description="H-T-H motif" evidence="1">
    <location>
        <begin position="275"/>
        <end position="309"/>
    </location>
</feature>